<comment type="function">
    <text evidence="1">Component of the acetyl coenzyme A carboxylase (ACC) complex. Biotin carboxylase (BC) catalyzes the carboxylation of biotin on its carrier protein (BCCP) and then the CO(2) group is transferred by the transcarboxylase to acetyl-CoA to form malonyl-CoA.</text>
</comment>
<comment type="catalytic activity">
    <reaction evidence="1">
        <text>N(6)-carboxybiotinyl-L-lysyl-[protein] + acetyl-CoA = N(6)-biotinyl-L-lysyl-[protein] + malonyl-CoA</text>
        <dbReference type="Rhea" id="RHEA:54728"/>
        <dbReference type="Rhea" id="RHEA-COMP:10505"/>
        <dbReference type="Rhea" id="RHEA-COMP:10506"/>
        <dbReference type="ChEBI" id="CHEBI:57288"/>
        <dbReference type="ChEBI" id="CHEBI:57384"/>
        <dbReference type="ChEBI" id="CHEBI:83144"/>
        <dbReference type="ChEBI" id="CHEBI:83145"/>
        <dbReference type="EC" id="2.1.3.15"/>
    </reaction>
</comment>
<comment type="cofactor">
    <cofactor evidence="1">
        <name>Zn(2+)</name>
        <dbReference type="ChEBI" id="CHEBI:29105"/>
    </cofactor>
    <text evidence="1">Binds 1 zinc ion per subunit.</text>
</comment>
<comment type="pathway">
    <text evidence="1">Lipid metabolism; malonyl-CoA biosynthesis; malonyl-CoA from acetyl-CoA: step 1/1.</text>
</comment>
<comment type="subunit">
    <text evidence="1">Acetyl-CoA carboxylase is a heterohexamer composed of biotin carboxyl carrier protein (AccB), biotin carboxylase (AccC) and two subunits each of ACCase subunit alpha (AccA) and ACCase subunit beta (AccD).</text>
</comment>
<comment type="subcellular location">
    <subcellularLocation>
        <location evidence="1">Cytoplasm</location>
    </subcellularLocation>
</comment>
<comment type="similarity">
    <text evidence="1">Belongs to the AccD/PCCB family.</text>
</comment>
<sequence length="304" mass="33244">MSWIERIKSNITPTRKASIPEGVWTKCDSCGQVLYRAELERNLEVCPKCDHHMRMSARNRLHSLLDEGSLVELGSELEPKDVLKFRDSKKYKDRLASAQKETGEKDALVVMKGTLHGMPVVAAAFEFAFMGGSMGSVVGARFVRAVEQALEDNCPLVCFSASGGARMQEALMSLMQMAKTSAALAKMQERGLPYISVLTDPTMGGVSASFAMLGDLNIAEPKALIGFAGPRVIEQTVREKLPPGFQRSEFLIEKGAIDMIVRRPEMRLKLASILAKLMNLPAPNPDAPREGVVVPPAPDQESEV</sequence>
<protein>
    <recommendedName>
        <fullName evidence="1">Acetyl-coenzyme A carboxylase carboxyl transferase subunit beta</fullName>
        <shortName evidence="1">ACCase subunit beta</shortName>
        <shortName evidence="1">Acetyl-CoA carboxylase carboxyltransferase subunit beta</shortName>
        <ecNumber evidence="1">2.1.3.15</ecNumber>
    </recommendedName>
</protein>
<evidence type="ECO:0000255" key="1">
    <source>
        <dbReference type="HAMAP-Rule" id="MF_01395"/>
    </source>
</evidence>
<evidence type="ECO:0000255" key="2">
    <source>
        <dbReference type="PROSITE-ProRule" id="PRU01136"/>
    </source>
</evidence>
<evidence type="ECO:0000256" key="3">
    <source>
        <dbReference type="SAM" id="MobiDB-lite"/>
    </source>
</evidence>
<keyword id="KW-0067">ATP-binding</keyword>
<keyword id="KW-0963">Cytoplasm</keyword>
<keyword id="KW-0275">Fatty acid biosynthesis</keyword>
<keyword id="KW-0276">Fatty acid metabolism</keyword>
<keyword id="KW-0444">Lipid biosynthesis</keyword>
<keyword id="KW-0443">Lipid metabolism</keyword>
<keyword id="KW-0479">Metal-binding</keyword>
<keyword id="KW-0547">Nucleotide-binding</keyword>
<keyword id="KW-0808">Transferase</keyword>
<keyword id="KW-0862">Zinc</keyword>
<keyword id="KW-0863">Zinc-finger</keyword>
<feature type="chain" id="PRO_0000359056" description="Acetyl-coenzyme A carboxylase carboxyl transferase subunit beta">
    <location>
        <begin position="1"/>
        <end position="304"/>
    </location>
</feature>
<feature type="domain" description="CoA carboxyltransferase N-terminal" evidence="2">
    <location>
        <begin position="23"/>
        <end position="292"/>
    </location>
</feature>
<feature type="zinc finger region" description="C4-type" evidence="1">
    <location>
        <begin position="27"/>
        <end position="49"/>
    </location>
</feature>
<feature type="region of interest" description="Disordered" evidence="3">
    <location>
        <begin position="284"/>
        <end position="304"/>
    </location>
</feature>
<feature type="binding site" evidence="1">
    <location>
        <position position="27"/>
    </location>
    <ligand>
        <name>Zn(2+)</name>
        <dbReference type="ChEBI" id="CHEBI:29105"/>
    </ligand>
</feature>
<feature type="binding site" evidence="1">
    <location>
        <position position="30"/>
    </location>
    <ligand>
        <name>Zn(2+)</name>
        <dbReference type="ChEBI" id="CHEBI:29105"/>
    </ligand>
</feature>
<feature type="binding site" evidence="1">
    <location>
        <position position="46"/>
    </location>
    <ligand>
        <name>Zn(2+)</name>
        <dbReference type="ChEBI" id="CHEBI:29105"/>
    </ligand>
</feature>
<feature type="binding site" evidence="1">
    <location>
        <position position="49"/>
    </location>
    <ligand>
        <name>Zn(2+)</name>
        <dbReference type="ChEBI" id="CHEBI:29105"/>
    </ligand>
</feature>
<dbReference type="EC" id="2.1.3.15" evidence="1"/>
<dbReference type="EMBL" id="CP000026">
    <property type="protein sequence ID" value="AAV76500.1"/>
    <property type="molecule type" value="Genomic_DNA"/>
</dbReference>
<dbReference type="RefSeq" id="WP_000118384.1">
    <property type="nucleotide sequence ID" value="NC_006511.1"/>
</dbReference>
<dbReference type="SMR" id="Q5PCV4"/>
<dbReference type="KEGG" id="spt:SPA0498"/>
<dbReference type="HOGENOM" id="CLU_015486_1_0_6"/>
<dbReference type="UniPathway" id="UPA00655">
    <property type="reaction ID" value="UER00711"/>
</dbReference>
<dbReference type="Proteomes" id="UP000008185">
    <property type="component" value="Chromosome"/>
</dbReference>
<dbReference type="GO" id="GO:0009329">
    <property type="term" value="C:acetate CoA-transferase complex"/>
    <property type="evidence" value="ECO:0007669"/>
    <property type="project" value="TreeGrafter"/>
</dbReference>
<dbReference type="GO" id="GO:0003989">
    <property type="term" value="F:acetyl-CoA carboxylase activity"/>
    <property type="evidence" value="ECO:0007669"/>
    <property type="project" value="InterPro"/>
</dbReference>
<dbReference type="GO" id="GO:0005524">
    <property type="term" value="F:ATP binding"/>
    <property type="evidence" value="ECO:0007669"/>
    <property type="project" value="UniProtKB-KW"/>
</dbReference>
<dbReference type="GO" id="GO:0016743">
    <property type="term" value="F:carboxyl- or carbamoyltransferase activity"/>
    <property type="evidence" value="ECO:0007669"/>
    <property type="project" value="UniProtKB-UniRule"/>
</dbReference>
<dbReference type="GO" id="GO:0008270">
    <property type="term" value="F:zinc ion binding"/>
    <property type="evidence" value="ECO:0007669"/>
    <property type="project" value="UniProtKB-UniRule"/>
</dbReference>
<dbReference type="GO" id="GO:0006633">
    <property type="term" value="P:fatty acid biosynthetic process"/>
    <property type="evidence" value="ECO:0007669"/>
    <property type="project" value="UniProtKB-KW"/>
</dbReference>
<dbReference type="GO" id="GO:2001295">
    <property type="term" value="P:malonyl-CoA biosynthetic process"/>
    <property type="evidence" value="ECO:0007669"/>
    <property type="project" value="UniProtKB-UniRule"/>
</dbReference>
<dbReference type="FunFam" id="3.90.226.10:FF:000013">
    <property type="entry name" value="Acetyl-coenzyme A carboxylase carboxyl transferase subunit beta"/>
    <property type="match status" value="1"/>
</dbReference>
<dbReference type="Gene3D" id="3.90.226.10">
    <property type="entry name" value="2-enoyl-CoA Hydratase, Chain A, domain 1"/>
    <property type="match status" value="1"/>
</dbReference>
<dbReference type="HAMAP" id="MF_01395">
    <property type="entry name" value="AcetylCoA_CT_beta"/>
    <property type="match status" value="1"/>
</dbReference>
<dbReference type="InterPro" id="IPR034733">
    <property type="entry name" value="AcCoA_carboxyl_beta"/>
</dbReference>
<dbReference type="InterPro" id="IPR000438">
    <property type="entry name" value="Acetyl_CoA_COase_Trfase_b_su"/>
</dbReference>
<dbReference type="InterPro" id="IPR029045">
    <property type="entry name" value="ClpP/crotonase-like_dom_sf"/>
</dbReference>
<dbReference type="InterPro" id="IPR011762">
    <property type="entry name" value="COA_CT_N"/>
</dbReference>
<dbReference type="InterPro" id="IPR041010">
    <property type="entry name" value="Znf-ACC"/>
</dbReference>
<dbReference type="NCBIfam" id="TIGR00515">
    <property type="entry name" value="accD"/>
    <property type="match status" value="1"/>
</dbReference>
<dbReference type="PANTHER" id="PTHR42995">
    <property type="entry name" value="ACETYL-COENZYME A CARBOXYLASE CARBOXYL TRANSFERASE SUBUNIT BETA, CHLOROPLASTIC"/>
    <property type="match status" value="1"/>
</dbReference>
<dbReference type="PANTHER" id="PTHR42995:SF5">
    <property type="entry name" value="ACETYL-COENZYME A CARBOXYLASE CARBOXYL TRANSFERASE SUBUNIT BETA, CHLOROPLASTIC"/>
    <property type="match status" value="1"/>
</dbReference>
<dbReference type="Pfam" id="PF01039">
    <property type="entry name" value="Carboxyl_trans"/>
    <property type="match status" value="1"/>
</dbReference>
<dbReference type="Pfam" id="PF17848">
    <property type="entry name" value="Zn_ribbon_ACC"/>
    <property type="match status" value="1"/>
</dbReference>
<dbReference type="PRINTS" id="PR01070">
    <property type="entry name" value="ACCCTRFRASEB"/>
</dbReference>
<dbReference type="SUPFAM" id="SSF52096">
    <property type="entry name" value="ClpP/crotonase"/>
    <property type="match status" value="1"/>
</dbReference>
<dbReference type="PROSITE" id="PS50980">
    <property type="entry name" value="COA_CT_NTER"/>
    <property type="match status" value="1"/>
</dbReference>
<gene>
    <name evidence="1" type="primary">accD</name>
    <name type="ordered locus">SPA0498</name>
</gene>
<accession>Q5PCV4</accession>
<proteinExistence type="inferred from homology"/>
<reference key="1">
    <citation type="journal article" date="2004" name="Nat. Genet.">
        <title>Comparison of genome degradation in Paratyphi A and Typhi, human-restricted serovars of Salmonella enterica that cause typhoid.</title>
        <authorList>
            <person name="McClelland M."/>
            <person name="Sanderson K.E."/>
            <person name="Clifton S.W."/>
            <person name="Latreille P."/>
            <person name="Porwollik S."/>
            <person name="Sabo A."/>
            <person name="Meyer R."/>
            <person name="Bieri T."/>
            <person name="Ozersky P."/>
            <person name="McLellan M."/>
            <person name="Harkins C.R."/>
            <person name="Wang C."/>
            <person name="Nguyen C."/>
            <person name="Berghoff A."/>
            <person name="Elliott G."/>
            <person name="Kohlberg S."/>
            <person name="Strong C."/>
            <person name="Du F."/>
            <person name="Carter J."/>
            <person name="Kremizki C."/>
            <person name="Layman D."/>
            <person name="Leonard S."/>
            <person name="Sun H."/>
            <person name="Fulton L."/>
            <person name="Nash W."/>
            <person name="Miner T."/>
            <person name="Minx P."/>
            <person name="Delehaunty K."/>
            <person name="Fronick C."/>
            <person name="Magrini V."/>
            <person name="Nhan M."/>
            <person name="Warren W."/>
            <person name="Florea L."/>
            <person name="Spieth J."/>
            <person name="Wilson R.K."/>
        </authorList>
    </citation>
    <scope>NUCLEOTIDE SEQUENCE [LARGE SCALE GENOMIC DNA]</scope>
    <source>
        <strain>ATCC 9150 / SARB42</strain>
    </source>
</reference>
<name>ACCD_SALPA</name>
<organism>
    <name type="scientific">Salmonella paratyphi A (strain ATCC 9150 / SARB42)</name>
    <dbReference type="NCBI Taxonomy" id="295319"/>
    <lineage>
        <taxon>Bacteria</taxon>
        <taxon>Pseudomonadati</taxon>
        <taxon>Pseudomonadota</taxon>
        <taxon>Gammaproteobacteria</taxon>
        <taxon>Enterobacterales</taxon>
        <taxon>Enterobacteriaceae</taxon>
        <taxon>Salmonella</taxon>
    </lineage>
</organism>